<feature type="chain" id="PRO_0000170294" description="Large ribosomal subunit protein bL33c">
    <location>
        <begin position="1" status="less than"/>
        <end position="40"/>
    </location>
</feature>
<feature type="non-terminal residue">
    <location>
        <position position="1"/>
    </location>
</feature>
<evidence type="ECO:0000305" key="1"/>
<keyword id="KW-0150">Chloroplast</keyword>
<keyword id="KW-0934">Plastid</keyword>
<keyword id="KW-0687">Ribonucleoprotein</keyword>
<keyword id="KW-0689">Ribosomal protein</keyword>
<dbReference type="EMBL" id="X82511">
    <property type="protein sequence ID" value="CAA57884.1"/>
    <property type="molecule type" value="mRNA"/>
</dbReference>
<dbReference type="PIR" id="S61539">
    <property type="entry name" value="S61539"/>
</dbReference>
<dbReference type="SMR" id="P51416"/>
<dbReference type="GO" id="GO:0009507">
    <property type="term" value="C:chloroplast"/>
    <property type="evidence" value="ECO:0007669"/>
    <property type="project" value="UniProtKB-SubCell"/>
</dbReference>
<dbReference type="GO" id="GO:1990904">
    <property type="term" value="C:ribonucleoprotein complex"/>
    <property type="evidence" value="ECO:0007669"/>
    <property type="project" value="UniProtKB-KW"/>
</dbReference>
<dbReference type="GO" id="GO:0005840">
    <property type="term" value="C:ribosome"/>
    <property type="evidence" value="ECO:0007669"/>
    <property type="project" value="UniProtKB-KW"/>
</dbReference>
<dbReference type="GO" id="GO:0003735">
    <property type="term" value="F:structural constituent of ribosome"/>
    <property type="evidence" value="ECO:0007669"/>
    <property type="project" value="InterPro"/>
</dbReference>
<dbReference type="GO" id="GO:0006412">
    <property type="term" value="P:translation"/>
    <property type="evidence" value="ECO:0007669"/>
    <property type="project" value="InterPro"/>
</dbReference>
<dbReference type="Gene3D" id="2.20.28.120">
    <property type="entry name" value="Ribosomal protein L33"/>
    <property type="match status" value="1"/>
</dbReference>
<dbReference type="HAMAP" id="MF_00294">
    <property type="entry name" value="Ribosomal_bL33"/>
    <property type="match status" value="1"/>
</dbReference>
<dbReference type="InterPro" id="IPR001705">
    <property type="entry name" value="Ribosomal_bL33"/>
</dbReference>
<dbReference type="InterPro" id="IPR018264">
    <property type="entry name" value="Ribosomal_bL33_CS"/>
</dbReference>
<dbReference type="InterPro" id="IPR038584">
    <property type="entry name" value="Ribosomal_bL33_sf"/>
</dbReference>
<dbReference type="InterPro" id="IPR011332">
    <property type="entry name" value="Ribosomal_zn-bd"/>
</dbReference>
<dbReference type="NCBIfam" id="NF001764">
    <property type="entry name" value="PRK00504.1"/>
    <property type="match status" value="1"/>
</dbReference>
<dbReference type="NCBIfam" id="NF001860">
    <property type="entry name" value="PRK00595.1"/>
    <property type="match status" value="1"/>
</dbReference>
<dbReference type="NCBIfam" id="TIGR01023">
    <property type="entry name" value="rpmG_bact"/>
    <property type="match status" value="1"/>
</dbReference>
<dbReference type="PANTHER" id="PTHR43168">
    <property type="entry name" value="50S RIBOSOMAL PROTEIN L33, CHLOROPLASTIC"/>
    <property type="match status" value="1"/>
</dbReference>
<dbReference type="PANTHER" id="PTHR43168:SF2">
    <property type="entry name" value="LARGE RIBOSOMAL SUBUNIT PROTEIN BL33C"/>
    <property type="match status" value="1"/>
</dbReference>
<dbReference type="Pfam" id="PF00471">
    <property type="entry name" value="Ribosomal_L33"/>
    <property type="match status" value="1"/>
</dbReference>
<dbReference type="SUPFAM" id="SSF57829">
    <property type="entry name" value="Zn-binding ribosomal proteins"/>
    <property type="match status" value="1"/>
</dbReference>
<dbReference type="PROSITE" id="PS00582">
    <property type="entry name" value="RIBOSOMAL_L33"/>
    <property type="match status" value="1"/>
</dbReference>
<geneLocation type="chloroplast"/>
<accession>P51416</accession>
<organism>
    <name type="scientific">Pisum sativum</name>
    <name type="common">Garden pea</name>
    <name type="synonym">Lathyrus oleraceus</name>
    <dbReference type="NCBI Taxonomy" id="3888"/>
    <lineage>
        <taxon>Eukaryota</taxon>
        <taxon>Viridiplantae</taxon>
        <taxon>Streptophyta</taxon>
        <taxon>Embryophyta</taxon>
        <taxon>Tracheophyta</taxon>
        <taxon>Spermatophyta</taxon>
        <taxon>Magnoliopsida</taxon>
        <taxon>eudicotyledons</taxon>
        <taxon>Gunneridae</taxon>
        <taxon>Pentapetalae</taxon>
        <taxon>rosids</taxon>
        <taxon>fabids</taxon>
        <taxon>Fabales</taxon>
        <taxon>Fabaceae</taxon>
        <taxon>Papilionoideae</taxon>
        <taxon>50 kb inversion clade</taxon>
        <taxon>NPAAA clade</taxon>
        <taxon>Hologalegina</taxon>
        <taxon>IRL clade</taxon>
        <taxon>Fabeae</taxon>
        <taxon>Pisum</taxon>
    </lineage>
</organism>
<reference key="1">
    <citation type="journal article" date="1995" name="Biochem. Mol. Biol. Int.">
        <title>Evolution of the NH2- and COOH-terminal extensions of chloroplast ribosomal protein S18. Nucleotide sequence of pea and rye chloroplast rps 18 genes.</title>
        <authorList>
            <person name="Wegloehner W."/>
            <person name="Kauschmann A."/>
            <person name="Subramanian A.R."/>
        </authorList>
    </citation>
    <scope>NUCLEOTIDE SEQUENCE [MRNA]</scope>
    <source>
        <tissue>Leaf</tissue>
    </source>
</reference>
<comment type="subcellular location">
    <subcellularLocation>
        <location>Plastid</location>
        <location>Chloroplast</location>
    </subcellularLocation>
</comment>
<comment type="similarity">
    <text evidence="1">Belongs to the bacterial ribosomal protein bL33 family.</text>
</comment>
<name>RK33_PEA</name>
<sequence>SRGISRYITKKNRHNTPSRLELRKFCPFCCKHMIHAEIKK</sequence>
<proteinExistence type="evidence at transcript level"/>
<gene>
    <name type="primary">rpl33</name>
</gene>
<protein>
    <recommendedName>
        <fullName evidence="1">Large ribosomal subunit protein bL33c</fullName>
    </recommendedName>
    <alternativeName>
        <fullName>50S ribosomal protein L33, chloroplastic</fullName>
    </alternativeName>
</protein>